<name>UBIA_ACIET</name>
<dbReference type="EC" id="2.5.1.39" evidence="1"/>
<dbReference type="EMBL" id="CP001392">
    <property type="protein sequence ID" value="ACM31855.1"/>
    <property type="molecule type" value="Genomic_DNA"/>
</dbReference>
<dbReference type="RefSeq" id="WP_011803842.1">
    <property type="nucleotide sequence ID" value="NC_011992.1"/>
</dbReference>
<dbReference type="SMR" id="B9MBT5"/>
<dbReference type="KEGG" id="dia:Dtpsy_0371"/>
<dbReference type="eggNOG" id="COG0382">
    <property type="taxonomic scope" value="Bacteria"/>
</dbReference>
<dbReference type="HOGENOM" id="CLU_034879_1_0_4"/>
<dbReference type="UniPathway" id="UPA00232"/>
<dbReference type="Proteomes" id="UP000000450">
    <property type="component" value="Chromosome"/>
</dbReference>
<dbReference type="GO" id="GO:0005886">
    <property type="term" value="C:plasma membrane"/>
    <property type="evidence" value="ECO:0007669"/>
    <property type="project" value="UniProtKB-SubCell"/>
</dbReference>
<dbReference type="GO" id="GO:0008412">
    <property type="term" value="F:4-hydroxybenzoate polyprenyltransferase activity"/>
    <property type="evidence" value="ECO:0007669"/>
    <property type="project" value="UniProtKB-UniRule"/>
</dbReference>
<dbReference type="GO" id="GO:0006744">
    <property type="term" value="P:ubiquinone biosynthetic process"/>
    <property type="evidence" value="ECO:0007669"/>
    <property type="project" value="UniProtKB-UniRule"/>
</dbReference>
<dbReference type="CDD" id="cd13959">
    <property type="entry name" value="PT_UbiA_COQ2"/>
    <property type="match status" value="1"/>
</dbReference>
<dbReference type="FunFam" id="1.10.357.140:FF:000008">
    <property type="entry name" value="4-hydroxybenzoate octaprenyltransferase"/>
    <property type="match status" value="1"/>
</dbReference>
<dbReference type="FunFam" id="1.20.120.1780:FF:000001">
    <property type="entry name" value="4-hydroxybenzoate octaprenyltransferase"/>
    <property type="match status" value="1"/>
</dbReference>
<dbReference type="Gene3D" id="1.10.357.140">
    <property type="entry name" value="UbiA prenyltransferase"/>
    <property type="match status" value="1"/>
</dbReference>
<dbReference type="Gene3D" id="1.20.120.1780">
    <property type="entry name" value="UbiA prenyltransferase"/>
    <property type="match status" value="1"/>
</dbReference>
<dbReference type="HAMAP" id="MF_01635">
    <property type="entry name" value="UbiA"/>
    <property type="match status" value="1"/>
</dbReference>
<dbReference type="InterPro" id="IPR006370">
    <property type="entry name" value="HB_polyprenyltransferase-like"/>
</dbReference>
<dbReference type="InterPro" id="IPR039653">
    <property type="entry name" value="Prenyltransferase"/>
</dbReference>
<dbReference type="InterPro" id="IPR000537">
    <property type="entry name" value="UbiA_prenyltransferase"/>
</dbReference>
<dbReference type="InterPro" id="IPR030470">
    <property type="entry name" value="UbiA_prenylTrfase_CS"/>
</dbReference>
<dbReference type="InterPro" id="IPR044878">
    <property type="entry name" value="UbiA_sf"/>
</dbReference>
<dbReference type="NCBIfam" id="TIGR01474">
    <property type="entry name" value="ubiA_proteo"/>
    <property type="match status" value="1"/>
</dbReference>
<dbReference type="PANTHER" id="PTHR11048:SF28">
    <property type="entry name" value="4-HYDROXYBENZOATE POLYPRENYLTRANSFERASE, MITOCHONDRIAL"/>
    <property type="match status" value="1"/>
</dbReference>
<dbReference type="PANTHER" id="PTHR11048">
    <property type="entry name" value="PRENYLTRANSFERASES"/>
    <property type="match status" value="1"/>
</dbReference>
<dbReference type="Pfam" id="PF01040">
    <property type="entry name" value="UbiA"/>
    <property type="match status" value="1"/>
</dbReference>
<dbReference type="PROSITE" id="PS00943">
    <property type="entry name" value="UBIA"/>
    <property type="match status" value="1"/>
</dbReference>
<proteinExistence type="inferred from homology"/>
<feature type="chain" id="PRO_1000186662" description="4-hydroxybenzoate octaprenyltransferase">
    <location>
        <begin position="1"/>
        <end position="290"/>
    </location>
</feature>
<feature type="transmembrane region" description="Helical" evidence="1">
    <location>
        <begin position="33"/>
        <end position="53"/>
    </location>
</feature>
<feature type="transmembrane region" description="Helical" evidence="1">
    <location>
        <begin position="91"/>
        <end position="111"/>
    </location>
</feature>
<feature type="transmembrane region" description="Helical" evidence="1">
    <location>
        <begin position="116"/>
        <end position="136"/>
    </location>
</feature>
<feature type="transmembrane region" description="Helical" evidence="1">
    <location>
        <begin position="138"/>
        <end position="158"/>
    </location>
</feature>
<feature type="transmembrane region" description="Helical" evidence="1">
    <location>
        <begin position="165"/>
        <end position="185"/>
    </location>
</feature>
<feature type="transmembrane region" description="Helical" evidence="1">
    <location>
        <begin position="212"/>
        <end position="232"/>
    </location>
</feature>
<feature type="transmembrane region" description="Helical" evidence="1">
    <location>
        <begin position="237"/>
        <end position="257"/>
    </location>
</feature>
<feature type="transmembrane region" description="Helical" evidence="1">
    <location>
        <begin position="269"/>
        <end position="289"/>
    </location>
</feature>
<comment type="function">
    <text evidence="1">Catalyzes the prenylation of para-hydroxybenzoate (PHB) with an all-trans polyprenyl group. Mediates the second step in the final reaction sequence of ubiquinone-8 (UQ-8) biosynthesis, which is the condensation of the polyisoprenoid side chain with PHB, generating the first membrane-bound Q intermediate 3-octaprenyl-4-hydroxybenzoate.</text>
</comment>
<comment type="catalytic activity">
    <reaction evidence="1">
        <text>all-trans-octaprenyl diphosphate + 4-hydroxybenzoate = 4-hydroxy-3-(all-trans-octaprenyl)benzoate + diphosphate</text>
        <dbReference type="Rhea" id="RHEA:27782"/>
        <dbReference type="ChEBI" id="CHEBI:1617"/>
        <dbReference type="ChEBI" id="CHEBI:17879"/>
        <dbReference type="ChEBI" id="CHEBI:33019"/>
        <dbReference type="ChEBI" id="CHEBI:57711"/>
        <dbReference type="EC" id="2.5.1.39"/>
    </reaction>
</comment>
<comment type="cofactor">
    <cofactor evidence="1">
        <name>Mg(2+)</name>
        <dbReference type="ChEBI" id="CHEBI:18420"/>
    </cofactor>
</comment>
<comment type="pathway">
    <text evidence="1">Cofactor biosynthesis; ubiquinone biosynthesis.</text>
</comment>
<comment type="subcellular location">
    <subcellularLocation>
        <location evidence="1">Cell inner membrane</location>
        <topology evidence="1">Multi-pass membrane protein</topology>
    </subcellularLocation>
</comment>
<comment type="similarity">
    <text evidence="1">Belongs to the UbiA prenyltransferase family.</text>
</comment>
<organism>
    <name type="scientific">Acidovorax ebreus (strain TPSY)</name>
    <name type="common">Diaphorobacter sp. (strain TPSY)</name>
    <dbReference type="NCBI Taxonomy" id="535289"/>
    <lineage>
        <taxon>Bacteria</taxon>
        <taxon>Pseudomonadati</taxon>
        <taxon>Pseudomonadota</taxon>
        <taxon>Betaproteobacteria</taxon>
        <taxon>Burkholderiales</taxon>
        <taxon>Comamonadaceae</taxon>
        <taxon>Diaphorobacter</taxon>
    </lineage>
</organism>
<accession>B9MBT5</accession>
<keyword id="KW-0997">Cell inner membrane</keyword>
<keyword id="KW-1003">Cell membrane</keyword>
<keyword id="KW-0460">Magnesium</keyword>
<keyword id="KW-0472">Membrane</keyword>
<keyword id="KW-1185">Reference proteome</keyword>
<keyword id="KW-0808">Transferase</keyword>
<keyword id="KW-0812">Transmembrane</keyword>
<keyword id="KW-1133">Transmembrane helix</keyword>
<keyword id="KW-0831">Ubiquinone biosynthesis</keyword>
<reference key="1">
    <citation type="submission" date="2009-01" db="EMBL/GenBank/DDBJ databases">
        <title>Complete sequence of Diaphorobacter sp. TPSY.</title>
        <authorList>
            <consortium name="US DOE Joint Genome Institute"/>
            <person name="Lucas S."/>
            <person name="Copeland A."/>
            <person name="Lapidus A."/>
            <person name="Glavina del Rio T."/>
            <person name="Tice H."/>
            <person name="Bruce D."/>
            <person name="Goodwin L."/>
            <person name="Pitluck S."/>
            <person name="Chertkov O."/>
            <person name="Brettin T."/>
            <person name="Detter J.C."/>
            <person name="Han C."/>
            <person name="Larimer F."/>
            <person name="Land M."/>
            <person name="Hauser L."/>
            <person name="Kyrpides N."/>
            <person name="Mikhailova N."/>
            <person name="Coates J.D."/>
        </authorList>
    </citation>
    <scope>NUCLEOTIDE SEQUENCE [LARGE SCALE GENOMIC DNA]</scope>
    <source>
        <strain>TPSY</strain>
    </source>
</reference>
<protein>
    <recommendedName>
        <fullName evidence="1">4-hydroxybenzoate octaprenyltransferase</fullName>
        <ecNumber evidence="1">2.5.1.39</ecNumber>
    </recommendedName>
    <alternativeName>
        <fullName evidence="1">4-HB polyprenyltransferase</fullName>
    </alternativeName>
</protein>
<gene>
    <name evidence="1" type="primary">ubiA</name>
    <name type="ordered locus">Dtpsy_0371</name>
</gene>
<evidence type="ECO:0000255" key="1">
    <source>
        <dbReference type="HAMAP-Rule" id="MF_01635"/>
    </source>
</evidence>
<sequence length="290" mass="31925">MSAVAPRSRLSLYLDLIRWNRPAGWLVLVWPTLAALWVAADGFPGWHLLAVFVAGTVLMRSAGCTINDIADRDFDRHVKRTTQRPITSGQLGVREAALVGVVLTLVAFVLVLTTRWEAVAWSVPAVLFTILYPFTKRFFAMPQAFLGIAFNFGIVIAFAAVQGRVPATAWVLWLANLFLVLAYDTEYAMVDRDDDLKIGMKTSAITLGRFDVAAIMGFFVLCLGLTAWVLAPYGLGWPLWLGLGVAAAQVAWHFTLIKDRTREGCFTAFSKSHWIGAAIFAGVALGYLLR</sequence>